<dbReference type="EC" id="5.3.1.6" evidence="1"/>
<dbReference type="EMBL" id="CP001020">
    <property type="protein sequence ID" value="ACJ19528.1"/>
    <property type="molecule type" value="Genomic_DNA"/>
</dbReference>
<dbReference type="RefSeq" id="WP_005770348.1">
    <property type="nucleotide sequence ID" value="NC_011528.1"/>
</dbReference>
<dbReference type="SMR" id="B6J4C4"/>
<dbReference type="KEGG" id="cbc:CbuK_0214"/>
<dbReference type="HOGENOM" id="CLU_056590_1_1_6"/>
<dbReference type="UniPathway" id="UPA00115">
    <property type="reaction ID" value="UER00412"/>
</dbReference>
<dbReference type="GO" id="GO:0005829">
    <property type="term" value="C:cytosol"/>
    <property type="evidence" value="ECO:0007669"/>
    <property type="project" value="TreeGrafter"/>
</dbReference>
<dbReference type="GO" id="GO:0004751">
    <property type="term" value="F:ribose-5-phosphate isomerase activity"/>
    <property type="evidence" value="ECO:0007669"/>
    <property type="project" value="UniProtKB-UniRule"/>
</dbReference>
<dbReference type="GO" id="GO:0006014">
    <property type="term" value="P:D-ribose metabolic process"/>
    <property type="evidence" value="ECO:0007669"/>
    <property type="project" value="TreeGrafter"/>
</dbReference>
<dbReference type="GO" id="GO:0009052">
    <property type="term" value="P:pentose-phosphate shunt, non-oxidative branch"/>
    <property type="evidence" value="ECO:0007669"/>
    <property type="project" value="UniProtKB-UniRule"/>
</dbReference>
<dbReference type="CDD" id="cd01398">
    <property type="entry name" value="RPI_A"/>
    <property type="match status" value="1"/>
</dbReference>
<dbReference type="FunFam" id="3.30.70.260:FF:000004">
    <property type="entry name" value="Ribose-5-phosphate isomerase A"/>
    <property type="match status" value="1"/>
</dbReference>
<dbReference type="FunFam" id="3.40.50.1360:FF:000001">
    <property type="entry name" value="Ribose-5-phosphate isomerase A"/>
    <property type="match status" value="1"/>
</dbReference>
<dbReference type="Gene3D" id="3.30.70.260">
    <property type="match status" value="1"/>
</dbReference>
<dbReference type="Gene3D" id="3.40.50.1360">
    <property type="match status" value="1"/>
</dbReference>
<dbReference type="HAMAP" id="MF_00170">
    <property type="entry name" value="Rib_5P_isom_A"/>
    <property type="match status" value="1"/>
</dbReference>
<dbReference type="InterPro" id="IPR037171">
    <property type="entry name" value="NagB/RpiA_transferase-like"/>
</dbReference>
<dbReference type="InterPro" id="IPR020672">
    <property type="entry name" value="Ribose5P_isomerase_typA_subgr"/>
</dbReference>
<dbReference type="InterPro" id="IPR004788">
    <property type="entry name" value="Ribose5P_isomerase_type_A"/>
</dbReference>
<dbReference type="NCBIfam" id="NF001924">
    <property type="entry name" value="PRK00702.1"/>
    <property type="match status" value="1"/>
</dbReference>
<dbReference type="NCBIfam" id="TIGR00021">
    <property type="entry name" value="rpiA"/>
    <property type="match status" value="1"/>
</dbReference>
<dbReference type="PANTHER" id="PTHR11934">
    <property type="entry name" value="RIBOSE-5-PHOSPHATE ISOMERASE"/>
    <property type="match status" value="1"/>
</dbReference>
<dbReference type="PANTHER" id="PTHR11934:SF0">
    <property type="entry name" value="RIBOSE-5-PHOSPHATE ISOMERASE"/>
    <property type="match status" value="1"/>
</dbReference>
<dbReference type="Pfam" id="PF06026">
    <property type="entry name" value="Rib_5-P_isom_A"/>
    <property type="match status" value="1"/>
</dbReference>
<dbReference type="SUPFAM" id="SSF75445">
    <property type="entry name" value="D-ribose-5-phosphate isomerase (RpiA), lid domain"/>
    <property type="match status" value="1"/>
</dbReference>
<dbReference type="SUPFAM" id="SSF100950">
    <property type="entry name" value="NagB/RpiA/CoA transferase-like"/>
    <property type="match status" value="1"/>
</dbReference>
<protein>
    <recommendedName>
        <fullName evidence="1">Ribose-5-phosphate isomerase A</fullName>
        <ecNumber evidence="1">5.3.1.6</ecNumber>
    </recommendedName>
    <alternativeName>
        <fullName evidence="1">Phosphoriboisomerase A</fullName>
        <shortName evidence="1">PRI</shortName>
    </alternativeName>
</protein>
<accession>B6J4C4</accession>
<comment type="function">
    <text evidence="1">Catalyzes the reversible conversion of ribose-5-phosphate to ribulose 5-phosphate.</text>
</comment>
<comment type="catalytic activity">
    <reaction evidence="1">
        <text>aldehydo-D-ribose 5-phosphate = D-ribulose 5-phosphate</text>
        <dbReference type="Rhea" id="RHEA:14657"/>
        <dbReference type="ChEBI" id="CHEBI:58121"/>
        <dbReference type="ChEBI" id="CHEBI:58273"/>
        <dbReference type="EC" id="5.3.1.6"/>
    </reaction>
</comment>
<comment type="pathway">
    <text evidence="1">Carbohydrate degradation; pentose phosphate pathway; D-ribose 5-phosphate from D-ribulose 5-phosphate (non-oxidative stage): step 1/1.</text>
</comment>
<comment type="subunit">
    <text evidence="1">Homodimer.</text>
</comment>
<comment type="similarity">
    <text evidence="1">Belongs to the ribose 5-phosphate isomerase family.</text>
</comment>
<gene>
    <name evidence="1" type="primary">rpiA</name>
    <name type="ordered locus">CbuK_0214</name>
</gene>
<feature type="chain" id="PRO_1000097657" description="Ribose-5-phosphate isomerase A">
    <location>
        <begin position="1"/>
        <end position="220"/>
    </location>
</feature>
<feature type="active site" description="Proton acceptor" evidence="1">
    <location>
        <position position="103"/>
    </location>
</feature>
<feature type="binding site" evidence="1">
    <location>
        <begin position="28"/>
        <end position="31"/>
    </location>
    <ligand>
        <name>substrate</name>
    </ligand>
</feature>
<feature type="binding site" evidence="1">
    <location>
        <begin position="81"/>
        <end position="84"/>
    </location>
    <ligand>
        <name>substrate</name>
    </ligand>
</feature>
<feature type="binding site" evidence="1">
    <location>
        <begin position="94"/>
        <end position="97"/>
    </location>
    <ligand>
        <name>substrate</name>
    </ligand>
</feature>
<feature type="binding site" evidence="1">
    <location>
        <position position="121"/>
    </location>
    <ligand>
        <name>substrate</name>
    </ligand>
</feature>
<name>RPIA_COXB1</name>
<keyword id="KW-0413">Isomerase</keyword>
<evidence type="ECO:0000255" key="1">
    <source>
        <dbReference type="HAMAP-Rule" id="MF_00170"/>
    </source>
</evidence>
<sequence>MSKNELKKAAAMEAIQFVKNVNIVGVGTGSTVNYFIDALAEIKHQIEGAVASSVATENRLKEHRIPVVDLNSVSNVDVYVDGADEFNKHFYLTKGGGGALTREKIIAAAAKRFICIVDESKQVDVLGQFPLPIEVIPMARSFVAREIVKLKGDPVYRQGFTTDNGNVILDIHNLTILNPVELEAILNNIPGVIANGLFAQQPADDLLIGTPAGVQLHHRK</sequence>
<organism>
    <name type="scientific">Coxiella burnetii (strain CbuK_Q154)</name>
    <name type="common">Coxiella burnetii (strain Q154)</name>
    <dbReference type="NCBI Taxonomy" id="434924"/>
    <lineage>
        <taxon>Bacteria</taxon>
        <taxon>Pseudomonadati</taxon>
        <taxon>Pseudomonadota</taxon>
        <taxon>Gammaproteobacteria</taxon>
        <taxon>Legionellales</taxon>
        <taxon>Coxiellaceae</taxon>
        <taxon>Coxiella</taxon>
    </lineage>
</organism>
<reference key="1">
    <citation type="journal article" date="2009" name="Infect. Immun.">
        <title>Comparative genomics reveal extensive transposon-mediated genomic plasticity and diversity among potential effector proteins within the genus Coxiella.</title>
        <authorList>
            <person name="Beare P.A."/>
            <person name="Unsworth N."/>
            <person name="Andoh M."/>
            <person name="Voth D.E."/>
            <person name="Omsland A."/>
            <person name="Gilk S.D."/>
            <person name="Williams K.P."/>
            <person name="Sobral B.W."/>
            <person name="Kupko J.J. III"/>
            <person name="Porcella S.F."/>
            <person name="Samuel J.E."/>
            <person name="Heinzen R.A."/>
        </authorList>
    </citation>
    <scope>NUCLEOTIDE SEQUENCE [LARGE SCALE GENOMIC DNA]</scope>
    <source>
        <strain>CbuK_Q154</strain>
    </source>
</reference>
<proteinExistence type="inferred from homology"/>